<sequence>MARAKIALIGAGMIGGTLAHIAAREELGDILLFDIAEGTPQGKALDIAEASAVFGKDVSLKGVNDYADIAGADVCIVTAGVPRKPGMSRDDLLGINLKVMKAVGEGIKAHAPNAFVICITNPLDAMVWALQQFSGLPKEKVIGMAGVLDSARFAFFLAEKTGVSVEDIHAWTLGGHGDDMVPMVRHSTVGGLPLPELVKQGWLSQEELDGIVKRTRGGGGEIVALLKTGSAFYAPAESAIAMATSYLKDKKRVLPCATFLTGQYGLDGLYVGVPVVIGAGGAEKVIEFETNDEEKAMFAKSVESVKGLMEACKAIDSALV</sequence>
<protein>
    <recommendedName>
        <fullName evidence="1">Malate dehydrogenase</fullName>
        <ecNumber evidence="1">1.1.1.37</ecNumber>
    </recommendedName>
</protein>
<feature type="chain" id="PRO_1000081357" description="Malate dehydrogenase">
    <location>
        <begin position="1"/>
        <end position="320"/>
    </location>
</feature>
<feature type="active site" description="Proton acceptor" evidence="1">
    <location>
        <position position="176"/>
    </location>
</feature>
<feature type="binding site" evidence="1">
    <location>
        <begin position="10"/>
        <end position="15"/>
    </location>
    <ligand>
        <name>NAD(+)</name>
        <dbReference type="ChEBI" id="CHEBI:57540"/>
    </ligand>
</feature>
<feature type="binding site" evidence="1">
    <location>
        <position position="34"/>
    </location>
    <ligand>
        <name>NAD(+)</name>
        <dbReference type="ChEBI" id="CHEBI:57540"/>
    </ligand>
</feature>
<feature type="binding site" evidence="1">
    <location>
        <position position="83"/>
    </location>
    <ligand>
        <name>substrate</name>
    </ligand>
</feature>
<feature type="binding site" evidence="1">
    <location>
        <position position="89"/>
    </location>
    <ligand>
        <name>substrate</name>
    </ligand>
</feature>
<feature type="binding site" evidence="1">
    <location>
        <position position="96"/>
    </location>
    <ligand>
        <name>NAD(+)</name>
        <dbReference type="ChEBI" id="CHEBI:57540"/>
    </ligand>
</feature>
<feature type="binding site" evidence="1">
    <location>
        <begin position="119"/>
        <end position="121"/>
    </location>
    <ligand>
        <name>NAD(+)</name>
        <dbReference type="ChEBI" id="CHEBI:57540"/>
    </ligand>
</feature>
<feature type="binding site" evidence="1">
    <location>
        <position position="121"/>
    </location>
    <ligand>
        <name>substrate</name>
    </ligand>
</feature>
<feature type="binding site" evidence="1">
    <location>
        <position position="152"/>
    </location>
    <ligand>
        <name>substrate</name>
    </ligand>
</feature>
<accession>B0T6C1</accession>
<keyword id="KW-0520">NAD</keyword>
<keyword id="KW-0560">Oxidoreductase</keyword>
<keyword id="KW-0816">Tricarboxylic acid cycle</keyword>
<comment type="function">
    <text evidence="1">Catalyzes the reversible oxidation of malate to oxaloacetate.</text>
</comment>
<comment type="catalytic activity">
    <reaction evidence="1">
        <text>(S)-malate + NAD(+) = oxaloacetate + NADH + H(+)</text>
        <dbReference type="Rhea" id="RHEA:21432"/>
        <dbReference type="ChEBI" id="CHEBI:15378"/>
        <dbReference type="ChEBI" id="CHEBI:15589"/>
        <dbReference type="ChEBI" id="CHEBI:16452"/>
        <dbReference type="ChEBI" id="CHEBI:57540"/>
        <dbReference type="ChEBI" id="CHEBI:57945"/>
        <dbReference type="EC" id="1.1.1.37"/>
    </reaction>
</comment>
<comment type="similarity">
    <text evidence="1">Belongs to the LDH/MDH superfamily. MDH type 3 family.</text>
</comment>
<name>MDH_CAUSK</name>
<gene>
    <name evidence="1" type="primary">mdh</name>
    <name type="ordered locus">Caul_5004</name>
</gene>
<proteinExistence type="inferred from homology"/>
<reference key="1">
    <citation type="submission" date="2008-01" db="EMBL/GenBank/DDBJ databases">
        <title>Complete sequence of chromosome of Caulobacter sp. K31.</title>
        <authorList>
            <consortium name="US DOE Joint Genome Institute"/>
            <person name="Copeland A."/>
            <person name="Lucas S."/>
            <person name="Lapidus A."/>
            <person name="Barry K."/>
            <person name="Glavina del Rio T."/>
            <person name="Dalin E."/>
            <person name="Tice H."/>
            <person name="Pitluck S."/>
            <person name="Bruce D."/>
            <person name="Goodwin L."/>
            <person name="Thompson L.S."/>
            <person name="Brettin T."/>
            <person name="Detter J.C."/>
            <person name="Han C."/>
            <person name="Schmutz J."/>
            <person name="Larimer F."/>
            <person name="Land M."/>
            <person name="Hauser L."/>
            <person name="Kyrpides N."/>
            <person name="Kim E."/>
            <person name="Stephens C."/>
            <person name="Richardson P."/>
        </authorList>
    </citation>
    <scope>NUCLEOTIDE SEQUENCE [LARGE SCALE GENOMIC DNA]</scope>
    <source>
        <strain>K31</strain>
    </source>
</reference>
<organism>
    <name type="scientific">Caulobacter sp. (strain K31)</name>
    <dbReference type="NCBI Taxonomy" id="366602"/>
    <lineage>
        <taxon>Bacteria</taxon>
        <taxon>Pseudomonadati</taxon>
        <taxon>Pseudomonadota</taxon>
        <taxon>Alphaproteobacteria</taxon>
        <taxon>Caulobacterales</taxon>
        <taxon>Caulobacteraceae</taxon>
        <taxon>Caulobacter</taxon>
    </lineage>
</organism>
<dbReference type="EC" id="1.1.1.37" evidence="1"/>
<dbReference type="EMBL" id="CP000927">
    <property type="protein sequence ID" value="ABZ74124.1"/>
    <property type="molecule type" value="Genomic_DNA"/>
</dbReference>
<dbReference type="SMR" id="B0T6C1"/>
<dbReference type="STRING" id="366602.Caul_5004"/>
<dbReference type="KEGG" id="cak:Caul_5004"/>
<dbReference type="eggNOG" id="COG0039">
    <property type="taxonomic scope" value="Bacteria"/>
</dbReference>
<dbReference type="HOGENOM" id="CLU_045401_2_1_5"/>
<dbReference type="OrthoDB" id="9802969at2"/>
<dbReference type="GO" id="GO:0004459">
    <property type="term" value="F:L-lactate dehydrogenase activity"/>
    <property type="evidence" value="ECO:0007669"/>
    <property type="project" value="TreeGrafter"/>
</dbReference>
<dbReference type="GO" id="GO:0030060">
    <property type="term" value="F:L-malate dehydrogenase (NAD+) activity"/>
    <property type="evidence" value="ECO:0007669"/>
    <property type="project" value="UniProtKB-UniRule"/>
</dbReference>
<dbReference type="GO" id="GO:0006089">
    <property type="term" value="P:lactate metabolic process"/>
    <property type="evidence" value="ECO:0007669"/>
    <property type="project" value="TreeGrafter"/>
</dbReference>
<dbReference type="GO" id="GO:0006099">
    <property type="term" value="P:tricarboxylic acid cycle"/>
    <property type="evidence" value="ECO:0007669"/>
    <property type="project" value="UniProtKB-UniRule"/>
</dbReference>
<dbReference type="CDD" id="cd01339">
    <property type="entry name" value="LDH-like_MDH"/>
    <property type="match status" value="1"/>
</dbReference>
<dbReference type="FunFam" id="3.40.50.720:FF:000018">
    <property type="entry name" value="Malate dehydrogenase"/>
    <property type="match status" value="1"/>
</dbReference>
<dbReference type="FunFam" id="3.90.110.10:FF:000004">
    <property type="entry name" value="Malate dehydrogenase"/>
    <property type="match status" value="1"/>
</dbReference>
<dbReference type="Gene3D" id="3.90.110.10">
    <property type="entry name" value="Lactate dehydrogenase/glycoside hydrolase, family 4, C-terminal"/>
    <property type="match status" value="1"/>
</dbReference>
<dbReference type="Gene3D" id="3.40.50.720">
    <property type="entry name" value="NAD(P)-binding Rossmann-like Domain"/>
    <property type="match status" value="1"/>
</dbReference>
<dbReference type="HAMAP" id="MF_00487">
    <property type="entry name" value="Malate_dehydrog_3"/>
    <property type="match status" value="1"/>
</dbReference>
<dbReference type="InterPro" id="IPR001557">
    <property type="entry name" value="L-lactate/malate_DH"/>
</dbReference>
<dbReference type="InterPro" id="IPR022383">
    <property type="entry name" value="Lactate/malate_DH_C"/>
</dbReference>
<dbReference type="InterPro" id="IPR001236">
    <property type="entry name" value="Lactate/malate_DH_N"/>
</dbReference>
<dbReference type="InterPro" id="IPR015955">
    <property type="entry name" value="Lactate_DH/Glyco_Ohase_4_C"/>
</dbReference>
<dbReference type="InterPro" id="IPR011275">
    <property type="entry name" value="Malate_DH_type3"/>
</dbReference>
<dbReference type="InterPro" id="IPR036291">
    <property type="entry name" value="NAD(P)-bd_dom_sf"/>
</dbReference>
<dbReference type="NCBIfam" id="TIGR01763">
    <property type="entry name" value="MalateDH_bact"/>
    <property type="match status" value="1"/>
</dbReference>
<dbReference type="NCBIfam" id="NF004863">
    <property type="entry name" value="PRK06223.1"/>
    <property type="match status" value="1"/>
</dbReference>
<dbReference type="PANTHER" id="PTHR43128">
    <property type="entry name" value="L-2-HYDROXYCARBOXYLATE DEHYDROGENASE (NAD(P)(+))"/>
    <property type="match status" value="1"/>
</dbReference>
<dbReference type="PANTHER" id="PTHR43128:SF16">
    <property type="entry name" value="L-LACTATE DEHYDROGENASE"/>
    <property type="match status" value="1"/>
</dbReference>
<dbReference type="Pfam" id="PF02866">
    <property type="entry name" value="Ldh_1_C"/>
    <property type="match status" value="1"/>
</dbReference>
<dbReference type="Pfam" id="PF00056">
    <property type="entry name" value="Ldh_1_N"/>
    <property type="match status" value="1"/>
</dbReference>
<dbReference type="PIRSF" id="PIRSF000102">
    <property type="entry name" value="Lac_mal_DH"/>
    <property type="match status" value="1"/>
</dbReference>
<dbReference type="PRINTS" id="PR00086">
    <property type="entry name" value="LLDHDRGNASE"/>
</dbReference>
<dbReference type="SUPFAM" id="SSF56327">
    <property type="entry name" value="LDH C-terminal domain-like"/>
    <property type="match status" value="1"/>
</dbReference>
<dbReference type="SUPFAM" id="SSF51735">
    <property type="entry name" value="NAD(P)-binding Rossmann-fold domains"/>
    <property type="match status" value="1"/>
</dbReference>
<evidence type="ECO:0000255" key="1">
    <source>
        <dbReference type="HAMAP-Rule" id="MF_00487"/>
    </source>
</evidence>